<dbReference type="EMBL" id="AF288127">
    <property type="protein sequence ID" value="AAL36021.1"/>
    <property type="molecule type" value="Genomic_DNA"/>
</dbReference>
<dbReference type="GO" id="GO:0009507">
    <property type="term" value="C:chloroplast"/>
    <property type="evidence" value="ECO:0007669"/>
    <property type="project" value="UniProtKB-SubCell"/>
</dbReference>
<dbReference type="GO" id="GO:0003723">
    <property type="term" value="F:RNA binding"/>
    <property type="evidence" value="ECO:0007669"/>
    <property type="project" value="UniProtKB-KW"/>
</dbReference>
<dbReference type="GO" id="GO:0006397">
    <property type="term" value="P:mRNA processing"/>
    <property type="evidence" value="ECO:0007669"/>
    <property type="project" value="UniProtKB-KW"/>
</dbReference>
<dbReference type="GO" id="GO:0008380">
    <property type="term" value="P:RNA splicing"/>
    <property type="evidence" value="ECO:0007669"/>
    <property type="project" value="UniProtKB-UniRule"/>
</dbReference>
<dbReference type="GO" id="GO:0008033">
    <property type="term" value="P:tRNA processing"/>
    <property type="evidence" value="ECO:0007669"/>
    <property type="project" value="UniProtKB-KW"/>
</dbReference>
<dbReference type="HAMAP" id="MF_01390">
    <property type="entry name" value="MatK"/>
    <property type="match status" value="1"/>
</dbReference>
<dbReference type="InterPro" id="IPR024937">
    <property type="entry name" value="Domain_X"/>
</dbReference>
<dbReference type="InterPro" id="IPR002866">
    <property type="entry name" value="Maturase_MatK"/>
</dbReference>
<dbReference type="InterPro" id="IPR024942">
    <property type="entry name" value="Maturase_MatK_N"/>
</dbReference>
<dbReference type="PANTHER" id="PTHR34811">
    <property type="entry name" value="MATURASE K"/>
    <property type="match status" value="1"/>
</dbReference>
<dbReference type="PANTHER" id="PTHR34811:SF1">
    <property type="entry name" value="MATURASE K"/>
    <property type="match status" value="1"/>
</dbReference>
<dbReference type="Pfam" id="PF01348">
    <property type="entry name" value="Intron_maturas2"/>
    <property type="match status" value="1"/>
</dbReference>
<dbReference type="Pfam" id="PF01824">
    <property type="entry name" value="MatK_N"/>
    <property type="match status" value="1"/>
</dbReference>
<organism>
    <name type="scientific">Spiraea cantoniensis</name>
    <name type="common">Reeve's meadowsweet</name>
    <name type="synonym">Spiraea reevesiana</name>
    <dbReference type="NCBI Taxonomy" id="141007"/>
    <lineage>
        <taxon>Eukaryota</taxon>
        <taxon>Viridiplantae</taxon>
        <taxon>Streptophyta</taxon>
        <taxon>Embryophyta</taxon>
        <taxon>Tracheophyta</taxon>
        <taxon>Spermatophyta</taxon>
        <taxon>Magnoliopsida</taxon>
        <taxon>eudicotyledons</taxon>
        <taxon>Gunneridae</taxon>
        <taxon>Pentapetalae</taxon>
        <taxon>rosids</taxon>
        <taxon>fabids</taxon>
        <taxon>Rosales</taxon>
        <taxon>Rosaceae</taxon>
        <taxon>Amygdaloideae</taxon>
        <taxon>Spiraeeae</taxon>
        <taxon>Spiraea</taxon>
    </lineage>
</organism>
<evidence type="ECO:0000255" key="1">
    <source>
        <dbReference type="HAMAP-Rule" id="MF_01390"/>
    </source>
</evidence>
<comment type="function">
    <text evidence="1">Usually encoded in the trnK tRNA gene intron. Probably assists in splicing its own and other chloroplast group II introns.</text>
</comment>
<comment type="subcellular location">
    <subcellularLocation>
        <location>Plastid</location>
        <location>Chloroplast</location>
    </subcellularLocation>
</comment>
<comment type="similarity">
    <text evidence="1">Belongs to the intron maturase 2 family. MatK subfamily.</text>
</comment>
<proteinExistence type="inferred from homology"/>
<feature type="chain" id="PRO_0000143718" description="Maturase K">
    <location>
        <begin position="1"/>
        <end position="502"/>
    </location>
</feature>
<geneLocation type="chloroplast"/>
<name>MATK_SPICA</name>
<reference key="1">
    <citation type="journal article" date="2002" name="Plant Syst. Evol.">
        <title>Phylogenetic relationships in Rosaceae inferred from chloroplast matK and trnL-trnF nucleotide sequence data.</title>
        <authorList>
            <person name="Potter D."/>
            <person name="Gao F."/>
            <person name="Bortiri P.E."/>
            <person name="Oh S.-H."/>
            <person name="Baggett S."/>
        </authorList>
    </citation>
    <scope>NUCLEOTIDE SEQUENCE [GENOMIC DNA]</scope>
</reference>
<gene>
    <name evidence="1" type="primary">matK</name>
</gene>
<accession>Q8WJN2</accession>
<sequence>MEEYQGYFELDGYQQHDFLYPLIFREYIYALAHDHGLNRSVLLDNVGYDNKSSLLIIKRLISRMYQQNHLIISANDSNQNKFFGYNKNLYSQIISEGFAVIVEIPFSLRSVSSLETTETEIVKSYNLRSLHSLFPFLEDKFPHLNYVSDVLIPYPIHLEILVQTLRYWVKDPSSLHLLRLFLHEYYNYNWNSLITPNKFIKSNPRLFLLLYNSHVCEYESIFLFLRNQSSHLRLTSYGIFFEQIHFYEKIKYPVENDFTVAILWFFKDPFMHYVRYQGKSILASKDTPLLMNKWKYYLVNLWQCHSYVWSQPGRIYINQLSKHSLYFLGYFSSMRPNLSVVRSQMLENSFIMDNAMKKLDTLVPIIPLIVSLAKVKFCNALGHPISKSTWADSSDFDIIDRFVRICRNISHYYSGSSRKKSLYRIKYILRLSCVKTLARKHKSTVRTFLKRFGSKLLEEFFTEEEQIRSLIFPRASYTLNKFYRGRIWYFDIFYINDLVNHE</sequence>
<keyword id="KW-0150">Chloroplast</keyword>
<keyword id="KW-0507">mRNA processing</keyword>
<keyword id="KW-0934">Plastid</keyword>
<keyword id="KW-0694">RNA-binding</keyword>
<keyword id="KW-0819">tRNA processing</keyword>
<protein>
    <recommendedName>
        <fullName evidence="1">Maturase K</fullName>
    </recommendedName>
    <alternativeName>
        <fullName evidence="1">Intron maturase</fullName>
    </alternativeName>
</protein>